<sequence>MRPSNRAPDQLREVEIIRHYTKHAEGSVLVKFGDTHVLCTASVEDKVPPFLRGRNQGWTTAEYGMLPRSTGSRMDREAARGKQSGRTQEIQRLIGRSLRAVIDLGKLGERTIHLDCDVIQADGGTRTASITGAYVALHDAVGFMLANDMIQESPLRDAVAAISVGVYQGTPVLDLDYIEDSACDTDMNVVMTGSGGFVEIQGTAEGEPFQRAAMNRMLELAESGIRTLLLKQKEALGL</sequence>
<accession>Q1GXA4</accession>
<dbReference type="EC" id="2.7.7.56" evidence="1"/>
<dbReference type="EMBL" id="CP000284">
    <property type="protein sequence ID" value="ABE48314.1"/>
    <property type="molecule type" value="Genomic_DNA"/>
</dbReference>
<dbReference type="RefSeq" id="WP_011478411.1">
    <property type="nucleotide sequence ID" value="NC_007947.1"/>
</dbReference>
<dbReference type="SMR" id="Q1GXA4"/>
<dbReference type="STRING" id="265072.Mfla_0043"/>
<dbReference type="KEGG" id="mfa:Mfla_0043"/>
<dbReference type="eggNOG" id="COG0689">
    <property type="taxonomic scope" value="Bacteria"/>
</dbReference>
<dbReference type="HOGENOM" id="CLU_050858_0_0_4"/>
<dbReference type="OrthoDB" id="9802265at2"/>
<dbReference type="Proteomes" id="UP000002440">
    <property type="component" value="Chromosome"/>
</dbReference>
<dbReference type="GO" id="GO:0000175">
    <property type="term" value="F:3'-5'-RNA exonuclease activity"/>
    <property type="evidence" value="ECO:0007669"/>
    <property type="project" value="UniProtKB-UniRule"/>
</dbReference>
<dbReference type="GO" id="GO:0000049">
    <property type="term" value="F:tRNA binding"/>
    <property type="evidence" value="ECO:0007669"/>
    <property type="project" value="UniProtKB-UniRule"/>
</dbReference>
<dbReference type="GO" id="GO:0009022">
    <property type="term" value="F:tRNA nucleotidyltransferase activity"/>
    <property type="evidence" value="ECO:0007669"/>
    <property type="project" value="UniProtKB-UniRule"/>
</dbReference>
<dbReference type="GO" id="GO:0016075">
    <property type="term" value="P:rRNA catabolic process"/>
    <property type="evidence" value="ECO:0007669"/>
    <property type="project" value="UniProtKB-UniRule"/>
</dbReference>
<dbReference type="GO" id="GO:0006364">
    <property type="term" value="P:rRNA processing"/>
    <property type="evidence" value="ECO:0007669"/>
    <property type="project" value="UniProtKB-KW"/>
</dbReference>
<dbReference type="GO" id="GO:0008033">
    <property type="term" value="P:tRNA processing"/>
    <property type="evidence" value="ECO:0007669"/>
    <property type="project" value="UniProtKB-UniRule"/>
</dbReference>
<dbReference type="CDD" id="cd11362">
    <property type="entry name" value="RNase_PH_bact"/>
    <property type="match status" value="1"/>
</dbReference>
<dbReference type="FunFam" id="3.30.230.70:FF:000003">
    <property type="entry name" value="Ribonuclease PH"/>
    <property type="match status" value="1"/>
</dbReference>
<dbReference type="Gene3D" id="3.30.230.70">
    <property type="entry name" value="GHMP Kinase, N-terminal domain"/>
    <property type="match status" value="1"/>
</dbReference>
<dbReference type="HAMAP" id="MF_00564">
    <property type="entry name" value="RNase_PH"/>
    <property type="match status" value="1"/>
</dbReference>
<dbReference type="InterPro" id="IPR001247">
    <property type="entry name" value="ExoRNase_PH_dom1"/>
</dbReference>
<dbReference type="InterPro" id="IPR015847">
    <property type="entry name" value="ExoRNase_PH_dom2"/>
</dbReference>
<dbReference type="InterPro" id="IPR036345">
    <property type="entry name" value="ExoRNase_PH_dom2_sf"/>
</dbReference>
<dbReference type="InterPro" id="IPR027408">
    <property type="entry name" value="PNPase/RNase_PH_dom_sf"/>
</dbReference>
<dbReference type="InterPro" id="IPR020568">
    <property type="entry name" value="Ribosomal_Su5_D2-typ_SF"/>
</dbReference>
<dbReference type="InterPro" id="IPR050080">
    <property type="entry name" value="RNase_PH"/>
</dbReference>
<dbReference type="InterPro" id="IPR002381">
    <property type="entry name" value="RNase_PH_bac-type"/>
</dbReference>
<dbReference type="InterPro" id="IPR018336">
    <property type="entry name" value="RNase_PH_CS"/>
</dbReference>
<dbReference type="NCBIfam" id="TIGR01966">
    <property type="entry name" value="RNasePH"/>
    <property type="match status" value="1"/>
</dbReference>
<dbReference type="PANTHER" id="PTHR11953">
    <property type="entry name" value="EXOSOME COMPLEX COMPONENT"/>
    <property type="match status" value="1"/>
</dbReference>
<dbReference type="PANTHER" id="PTHR11953:SF0">
    <property type="entry name" value="EXOSOME COMPLEX COMPONENT RRP41"/>
    <property type="match status" value="1"/>
</dbReference>
<dbReference type="Pfam" id="PF01138">
    <property type="entry name" value="RNase_PH"/>
    <property type="match status" value="1"/>
</dbReference>
<dbReference type="Pfam" id="PF03725">
    <property type="entry name" value="RNase_PH_C"/>
    <property type="match status" value="1"/>
</dbReference>
<dbReference type="SUPFAM" id="SSF55666">
    <property type="entry name" value="Ribonuclease PH domain 2-like"/>
    <property type="match status" value="1"/>
</dbReference>
<dbReference type="SUPFAM" id="SSF54211">
    <property type="entry name" value="Ribosomal protein S5 domain 2-like"/>
    <property type="match status" value="1"/>
</dbReference>
<dbReference type="PROSITE" id="PS01277">
    <property type="entry name" value="RIBONUCLEASE_PH"/>
    <property type="match status" value="1"/>
</dbReference>
<reference key="1">
    <citation type="submission" date="2006-03" db="EMBL/GenBank/DDBJ databases">
        <title>Complete sequence of Methylobacillus flagellatus KT.</title>
        <authorList>
            <consortium name="US DOE Joint Genome Institute"/>
            <person name="Copeland A."/>
            <person name="Lucas S."/>
            <person name="Lapidus A."/>
            <person name="Barry K."/>
            <person name="Detter J.C."/>
            <person name="Glavina del Rio T."/>
            <person name="Hammon N."/>
            <person name="Israni S."/>
            <person name="Dalin E."/>
            <person name="Tice H."/>
            <person name="Pitluck S."/>
            <person name="Brettin T."/>
            <person name="Bruce D."/>
            <person name="Han C."/>
            <person name="Tapia R."/>
            <person name="Saunders E."/>
            <person name="Gilna P."/>
            <person name="Schmutz J."/>
            <person name="Larimer F."/>
            <person name="Land M."/>
            <person name="Kyrpides N."/>
            <person name="Anderson I."/>
            <person name="Richardson P."/>
        </authorList>
    </citation>
    <scope>NUCLEOTIDE SEQUENCE [LARGE SCALE GENOMIC DNA]</scope>
    <source>
        <strain>ATCC 51484 / DSM 6875 / VKM B-1610 / KT</strain>
    </source>
</reference>
<feature type="chain" id="PRO_1000024826" description="Ribonuclease PH">
    <location>
        <begin position="1"/>
        <end position="238"/>
    </location>
</feature>
<feature type="region of interest" description="Disordered" evidence="2">
    <location>
        <begin position="64"/>
        <end position="86"/>
    </location>
</feature>
<feature type="binding site" evidence="1">
    <location>
        <position position="86"/>
    </location>
    <ligand>
        <name>phosphate</name>
        <dbReference type="ChEBI" id="CHEBI:43474"/>
        <note>substrate</note>
    </ligand>
</feature>
<feature type="binding site" evidence="1">
    <location>
        <begin position="124"/>
        <end position="126"/>
    </location>
    <ligand>
        <name>phosphate</name>
        <dbReference type="ChEBI" id="CHEBI:43474"/>
        <note>substrate</note>
    </ligand>
</feature>
<organism>
    <name type="scientific">Methylobacillus flagellatus (strain ATCC 51484 / DSM 6875 / VKM B-1610 / KT)</name>
    <dbReference type="NCBI Taxonomy" id="265072"/>
    <lineage>
        <taxon>Bacteria</taxon>
        <taxon>Pseudomonadati</taxon>
        <taxon>Pseudomonadota</taxon>
        <taxon>Betaproteobacteria</taxon>
        <taxon>Nitrosomonadales</taxon>
        <taxon>Methylophilaceae</taxon>
        <taxon>Methylobacillus</taxon>
    </lineage>
</organism>
<proteinExistence type="inferred from homology"/>
<keyword id="KW-0548">Nucleotidyltransferase</keyword>
<keyword id="KW-1185">Reference proteome</keyword>
<keyword id="KW-0694">RNA-binding</keyword>
<keyword id="KW-0698">rRNA processing</keyword>
<keyword id="KW-0808">Transferase</keyword>
<keyword id="KW-0819">tRNA processing</keyword>
<keyword id="KW-0820">tRNA-binding</keyword>
<evidence type="ECO:0000255" key="1">
    <source>
        <dbReference type="HAMAP-Rule" id="MF_00564"/>
    </source>
</evidence>
<evidence type="ECO:0000256" key="2">
    <source>
        <dbReference type="SAM" id="MobiDB-lite"/>
    </source>
</evidence>
<gene>
    <name evidence="1" type="primary">rph</name>
    <name type="ordered locus">Mfla_0043</name>
</gene>
<protein>
    <recommendedName>
        <fullName evidence="1">Ribonuclease PH</fullName>
        <shortName evidence="1">RNase PH</shortName>
        <ecNumber evidence="1">2.7.7.56</ecNumber>
    </recommendedName>
    <alternativeName>
        <fullName evidence="1">tRNA nucleotidyltransferase</fullName>
    </alternativeName>
</protein>
<comment type="function">
    <text evidence="1">Phosphorolytic 3'-5' exoribonuclease that plays an important role in tRNA 3'-end maturation. Removes nucleotide residues following the 3'-CCA terminus of tRNAs; can also add nucleotides to the ends of RNA molecules by using nucleoside diphosphates as substrates, but this may not be physiologically important. Probably plays a role in initiation of 16S rRNA degradation (leading to ribosome degradation) during starvation.</text>
</comment>
<comment type="catalytic activity">
    <reaction evidence="1">
        <text>tRNA(n+1) + phosphate = tRNA(n) + a ribonucleoside 5'-diphosphate</text>
        <dbReference type="Rhea" id="RHEA:10628"/>
        <dbReference type="Rhea" id="RHEA-COMP:17343"/>
        <dbReference type="Rhea" id="RHEA-COMP:17344"/>
        <dbReference type="ChEBI" id="CHEBI:43474"/>
        <dbReference type="ChEBI" id="CHEBI:57930"/>
        <dbReference type="ChEBI" id="CHEBI:173114"/>
        <dbReference type="EC" id="2.7.7.56"/>
    </reaction>
</comment>
<comment type="subunit">
    <text evidence="1">Homohexameric ring arranged as a trimer of dimers.</text>
</comment>
<comment type="similarity">
    <text evidence="1">Belongs to the RNase PH family.</text>
</comment>
<name>RNPH_METFK</name>